<accession>Q292U2</accession>
<protein>
    <recommendedName>
        <fullName>Protein prickle</fullName>
    </recommendedName>
</protein>
<dbReference type="EMBL" id="CM000071">
    <property type="protein sequence ID" value="EAL24769.2"/>
    <property type="molecule type" value="Genomic_DNA"/>
</dbReference>
<dbReference type="SMR" id="Q292U2"/>
<dbReference type="FunCoup" id="Q292U2">
    <property type="interactions" value="135"/>
</dbReference>
<dbReference type="STRING" id="46245.Q292U2"/>
<dbReference type="eggNOG" id="KOG1704">
    <property type="taxonomic scope" value="Eukaryota"/>
</dbReference>
<dbReference type="HOGENOM" id="CLU_008937_0_0_1"/>
<dbReference type="InParanoid" id="Q292U2"/>
<dbReference type="OMA" id="GQEYDTV"/>
<dbReference type="Proteomes" id="UP000001819">
    <property type="component" value="Unplaced"/>
</dbReference>
<dbReference type="GO" id="GO:0005886">
    <property type="term" value="C:plasma membrane"/>
    <property type="evidence" value="ECO:0000250"/>
    <property type="project" value="UniProtKB"/>
</dbReference>
<dbReference type="GO" id="GO:0008270">
    <property type="term" value="F:zinc ion binding"/>
    <property type="evidence" value="ECO:0007669"/>
    <property type="project" value="InterPro"/>
</dbReference>
<dbReference type="GO" id="GO:0009948">
    <property type="term" value="P:anterior/posterior axis specification"/>
    <property type="evidence" value="ECO:0000250"/>
    <property type="project" value="UniProtKB"/>
</dbReference>
<dbReference type="GO" id="GO:0001736">
    <property type="term" value="P:establishment of planar polarity"/>
    <property type="evidence" value="ECO:0000250"/>
    <property type="project" value="UniProtKB"/>
</dbReference>
<dbReference type="GO" id="GO:0007164">
    <property type="term" value="P:establishment of tissue polarity"/>
    <property type="evidence" value="ECO:0000250"/>
    <property type="project" value="UniProtKB"/>
</dbReference>
<dbReference type="CDD" id="cd09415">
    <property type="entry name" value="LIM1_Prickle"/>
    <property type="match status" value="1"/>
</dbReference>
<dbReference type="CDD" id="cd09418">
    <property type="entry name" value="LIM2_Prickle"/>
    <property type="match status" value="1"/>
</dbReference>
<dbReference type="CDD" id="cd09420">
    <property type="entry name" value="LIM3_Prickle"/>
    <property type="match status" value="1"/>
</dbReference>
<dbReference type="CDD" id="cd09827">
    <property type="entry name" value="PET_Prickle"/>
    <property type="match status" value="1"/>
</dbReference>
<dbReference type="FunFam" id="2.10.110.10:FF:000035">
    <property type="entry name" value="prickle-like protein 2 isoform X1"/>
    <property type="match status" value="1"/>
</dbReference>
<dbReference type="FunFam" id="2.10.110.10:FF:000005">
    <property type="entry name" value="Testin isoform 1"/>
    <property type="match status" value="1"/>
</dbReference>
<dbReference type="Gene3D" id="2.10.110.10">
    <property type="entry name" value="Cysteine Rich Protein"/>
    <property type="match status" value="3"/>
</dbReference>
<dbReference type="InterPro" id="IPR033725">
    <property type="entry name" value="LIM1_prickle"/>
</dbReference>
<dbReference type="InterPro" id="IPR033726">
    <property type="entry name" value="LIM2_prickle"/>
</dbReference>
<dbReference type="InterPro" id="IPR033727">
    <property type="entry name" value="LIM3_prickle"/>
</dbReference>
<dbReference type="InterPro" id="IPR010442">
    <property type="entry name" value="PET_domain"/>
</dbReference>
<dbReference type="InterPro" id="IPR033723">
    <property type="entry name" value="PET_prickle"/>
</dbReference>
<dbReference type="InterPro" id="IPR047120">
    <property type="entry name" value="Pk/Esn/Tes"/>
</dbReference>
<dbReference type="InterPro" id="IPR001781">
    <property type="entry name" value="Znf_LIM"/>
</dbReference>
<dbReference type="PANTHER" id="PTHR24211">
    <property type="entry name" value="LIM DOMAIN-CONTAINING PROTEIN"/>
    <property type="match status" value="1"/>
</dbReference>
<dbReference type="PANTHER" id="PTHR24211:SF20">
    <property type="entry name" value="PROTEIN ESPINAS-RELATED"/>
    <property type="match status" value="1"/>
</dbReference>
<dbReference type="Pfam" id="PF00412">
    <property type="entry name" value="LIM"/>
    <property type="match status" value="2"/>
</dbReference>
<dbReference type="Pfam" id="PF06297">
    <property type="entry name" value="PET"/>
    <property type="match status" value="1"/>
</dbReference>
<dbReference type="SMART" id="SM00132">
    <property type="entry name" value="LIM"/>
    <property type="match status" value="3"/>
</dbReference>
<dbReference type="SUPFAM" id="SSF57716">
    <property type="entry name" value="Glucocorticoid receptor-like (DNA-binding domain)"/>
    <property type="match status" value="2"/>
</dbReference>
<dbReference type="PROSITE" id="PS00478">
    <property type="entry name" value="LIM_DOMAIN_1"/>
    <property type="match status" value="2"/>
</dbReference>
<dbReference type="PROSITE" id="PS50023">
    <property type="entry name" value="LIM_DOMAIN_2"/>
    <property type="match status" value="3"/>
</dbReference>
<dbReference type="PROSITE" id="PS51303">
    <property type="entry name" value="PET"/>
    <property type="match status" value="1"/>
</dbReference>
<name>PRIC1_DROPS</name>
<reference key="1">
    <citation type="journal article" date="2005" name="Genome Res.">
        <title>Comparative genome sequencing of Drosophila pseudoobscura: chromosomal, gene, and cis-element evolution.</title>
        <authorList>
            <person name="Richards S."/>
            <person name="Liu Y."/>
            <person name="Bettencourt B.R."/>
            <person name="Hradecky P."/>
            <person name="Letovsky S."/>
            <person name="Nielsen R."/>
            <person name="Thornton K."/>
            <person name="Hubisz M.J."/>
            <person name="Chen R."/>
            <person name="Meisel R.P."/>
            <person name="Couronne O."/>
            <person name="Hua S."/>
            <person name="Smith M.A."/>
            <person name="Zhang P."/>
            <person name="Liu J."/>
            <person name="Bussemaker H.J."/>
            <person name="van Batenburg M.F."/>
            <person name="Howells S.L."/>
            <person name="Scherer S.E."/>
            <person name="Sodergren E."/>
            <person name="Matthews B.B."/>
            <person name="Crosby M.A."/>
            <person name="Schroeder A.J."/>
            <person name="Ortiz-Barrientos D."/>
            <person name="Rives C.M."/>
            <person name="Metzker M.L."/>
            <person name="Muzny D.M."/>
            <person name="Scott G."/>
            <person name="Steffen D."/>
            <person name="Wheeler D.A."/>
            <person name="Worley K.C."/>
            <person name="Havlak P."/>
            <person name="Durbin K.J."/>
            <person name="Egan A."/>
            <person name="Gill R."/>
            <person name="Hume J."/>
            <person name="Morgan M.B."/>
            <person name="Miner G."/>
            <person name="Hamilton C."/>
            <person name="Huang Y."/>
            <person name="Waldron L."/>
            <person name="Verduzco D."/>
            <person name="Clerc-Blankenburg K.P."/>
            <person name="Dubchak I."/>
            <person name="Noor M.A.F."/>
            <person name="Anderson W."/>
            <person name="White K.P."/>
            <person name="Clark A.G."/>
            <person name="Schaeffer S.W."/>
            <person name="Gelbart W.M."/>
            <person name="Weinstock G.M."/>
            <person name="Gibbs R.A."/>
        </authorList>
    </citation>
    <scope>NUCLEOTIDE SEQUENCE [LARGE SCALE GENOMIC DNA]</scope>
    <source>
        <strain>MV2-25 / Tucson 14011-0121.94</strain>
    </source>
</reference>
<evidence type="ECO:0000250" key="1"/>
<evidence type="ECO:0000250" key="2">
    <source>
        <dbReference type="UniProtKB" id="A1Z6W3"/>
    </source>
</evidence>
<evidence type="ECO:0000255" key="3">
    <source>
        <dbReference type="PROSITE-ProRule" id="PRU00125"/>
    </source>
</evidence>
<evidence type="ECO:0000255" key="4">
    <source>
        <dbReference type="PROSITE-ProRule" id="PRU00636"/>
    </source>
</evidence>
<evidence type="ECO:0000256" key="5">
    <source>
        <dbReference type="SAM" id="MobiDB-lite"/>
    </source>
</evidence>
<evidence type="ECO:0000305" key="6"/>
<comment type="function">
    <text evidence="2">Acts in a planar cell polarity (PCP) complex; polarization along the apical/basal axis of epithelial cells. PCP signaling in the wing disk requires the receptor fz and the cytoplasmic proteins dsh and pk. These act in a feedback loop leading to activation of the jnk cascade and subsequent polarized arrangement of hairs and bristles. Dgo and pk compete with one another for dsh binding, thereby modulating fz dsh activity and ensuring tight control over fz PCP signaling. Vang, stan and pk function together to regulate the establishment of tissue polarity in the adult eye (By similarity).</text>
</comment>
<comment type="subunit">
    <text evidence="2">Interacts with dsh; PET and LIM domains interact with dsh DEP domain, in wing cells. Interacts with Vang in photoreceptor cells (By similarity).</text>
</comment>
<comment type="subcellular location">
    <subcellularLocation>
        <location evidence="1">Cell membrane</location>
        <topology evidence="1">Peripheral membrane protein</topology>
        <orientation evidence="1">Cytoplasmic side</orientation>
    </subcellularLocation>
</comment>
<comment type="similarity">
    <text evidence="6">Belongs to the prickle / espinas / testin family.</text>
</comment>
<keyword id="KW-1003">Cell membrane</keyword>
<keyword id="KW-0217">Developmental protein</keyword>
<keyword id="KW-0440">LIM domain</keyword>
<keyword id="KW-0472">Membrane</keyword>
<keyword id="KW-0479">Metal-binding</keyword>
<keyword id="KW-1185">Reference proteome</keyword>
<keyword id="KW-0677">Repeat</keyword>
<keyword id="KW-0862">Zinc</keyword>
<sequence length="1353" mass="145645">MSSLSAPPGGCGGDVAAAPATATSTATATATATATATATGSMEPAMVPRTANLLACKQWWRVCFLYGDQQKYYRQLYSKAAAQRLAGANQENDNAARGAGAGEGEGQEYDTVAMGDGDFIAAQLDAGEDVDDGIDLGDSSQPGGGATPTATATAGRPLFPLSSSPRRSKKLLRSLRAHVKGESRPEKPAKAAKPQSEPSSELTKRNARVTVLDDPFLFGIDADHLGDLVRGKQYSPLEATENIAKFYELQLETTEATAQVLEIIEQEEEPPEPPKPALPPKQKQPRPVPPLPARITQPAVLQPLTAGDLQFLNLSLRHRSLPRSMKPFKDPHDISFTFNELDTSTSATAAAAAAAVAAADVATGVGVGSSQQESNEPISRTPLTQISYLQKIPTLPRHFSPSGCPQGLPPPPALAGCGSALGLPSSSSASALYAAQNGGMLPTSPLPLQRHQQYLPPHHQQLPPLGAGPGQGQGHGLALGPGGAGLPQYSPAVSGCSSTAKYSNAQLPPHHHQLSPALSTPSPPSLLHHPAAGTSASAHAPFLAGPHMDMQRQSHSDDDSGCALEEYTWVPPGLRPDQVRLYFSQIPDDKVPYVNSPGEQYRVRQLLHQLPPHDNEVRYCHSLTDEERKELRLFSTQRKRDALGRGNVRQLMSARPCDGCDELISTGDIAVFATRLGPNASWHPACFTCCICRELLVDLIYFHRDGRMYCGRHHAETLKPRCSACDEIILADECTEAEGRAWHMNHFACHECDKQLGGQRYIMREGKPYCLHCFDAMFAEYCDYCGEAIGVDQGQMSHDGQHWHATDECFSCNTCRCSLLGRAFLPRRGAIYCSIACSKGEPPTPSDSSGTGMYTTPTPPTQRVRPQTRITSSHASSSPPMSPQQQQQHQASFNQAMYQLQTQQLEAAGGPVSQSQSYATSDSDAGVVKDLEHCRSGDHAGGGDFTDFSGGRASSTSHNMSPLNSPGDFQPHLMPKPMELQRDGVYNFNEMSSNLDTAWPAKPPLGATHSYQLQRQLMENQHTSSMPELAGKGPMLQHQMAAHFGQQPALHSSAQQFQHEYADIMHPPPPPPERGAVGEVPELPTPNLSVASTALPPELMGSPTHSAGDRSLNTPLSAHSATHGPTHPVSILSGASSSSPMSGEPAKKKGVRFEGIPDTLPRSRSYSGNGAGTSGGGDKDRDRDRERDRDRDRDKGGDKDRESGRHGPGHSSRRRRRRKSTSSTSSGNHHRSGSGHRSHSTTRADTYAPAQPLSSSYQGPPSVLQADSETAHKSPRQQREREREESAEESDVCSTCSSSSSSSEDYMMMYQLPQRRHYGGVRVSYVPNDALAYDRKRKPAEMAGDKDKNCIIS</sequence>
<organism>
    <name type="scientific">Drosophila pseudoobscura pseudoobscura</name>
    <name type="common">Fruit fly</name>
    <dbReference type="NCBI Taxonomy" id="46245"/>
    <lineage>
        <taxon>Eukaryota</taxon>
        <taxon>Metazoa</taxon>
        <taxon>Ecdysozoa</taxon>
        <taxon>Arthropoda</taxon>
        <taxon>Hexapoda</taxon>
        <taxon>Insecta</taxon>
        <taxon>Pterygota</taxon>
        <taxon>Neoptera</taxon>
        <taxon>Endopterygota</taxon>
        <taxon>Diptera</taxon>
        <taxon>Brachycera</taxon>
        <taxon>Muscomorpha</taxon>
        <taxon>Ephydroidea</taxon>
        <taxon>Drosophilidae</taxon>
        <taxon>Drosophila</taxon>
        <taxon>Sophophora</taxon>
    </lineage>
</organism>
<gene>
    <name evidence="2" type="primary">pk</name>
    <name type="ORF">GA10748</name>
</gene>
<feature type="chain" id="PRO_0000288835" description="Protein prickle">
    <location>
        <begin position="1"/>
        <end position="1353"/>
    </location>
</feature>
<feature type="domain" description="PET" evidence="4">
    <location>
        <begin position="548"/>
        <end position="656"/>
    </location>
</feature>
<feature type="domain" description="LIM zinc-binding 1" evidence="3">
    <location>
        <begin position="655"/>
        <end position="719"/>
    </location>
</feature>
<feature type="domain" description="LIM zinc-binding 2" evidence="3">
    <location>
        <begin position="720"/>
        <end position="780"/>
    </location>
</feature>
<feature type="domain" description="LIM zinc-binding 3" evidence="3">
    <location>
        <begin position="781"/>
        <end position="843"/>
    </location>
</feature>
<feature type="region of interest" description="Disordered" evidence="5">
    <location>
        <begin position="130"/>
        <end position="206"/>
    </location>
</feature>
<feature type="region of interest" description="Disordered" evidence="5">
    <location>
        <begin position="266"/>
        <end position="292"/>
    </location>
</feature>
<feature type="region of interest" description="Disordered" evidence="5">
    <location>
        <begin position="500"/>
        <end position="540"/>
    </location>
</feature>
<feature type="region of interest" description="Disordered" evidence="5">
    <location>
        <begin position="840"/>
        <end position="892"/>
    </location>
</feature>
<feature type="region of interest" description="Disordered" evidence="5">
    <location>
        <begin position="933"/>
        <end position="962"/>
    </location>
</feature>
<feature type="region of interest" description="Disordered" evidence="5">
    <location>
        <begin position="1062"/>
        <end position="1303"/>
    </location>
</feature>
<feature type="compositionally biased region" description="Low complexity" evidence="5">
    <location>
        <begin position="147"/>
        <end position="165"/>
    </location>
</feature>
<feature type="compositionally biased region" description="Basic residues" evidence="5">
    <location>
        <begin position="166"/>
        <end position="178"/>
    </location>
</feature>
<feature type="compositionally biased region" description="Basic and acidic residues" evidence="5">
    <location>
        <begin position="179"/>
        <end position="189"/>
    </location>
</feature>
<feature type="compositionally biased region" description="Low complexity" evidence="5">
    <location>
        <begin position="514"/>
        <end position="532"/>
    </location>
</feature>
<feature type="compositionally biased region" description="Low complexity" evidence="5">
    <location>
        <begin position="861"/>
        <end position="892"/>
    </location>
</feature>
<feature type="compositionally biased region" description="Polar residues" evidence="5">
    <location>
        <begin position="952"/>
        <end position="962"/>
    </location>
</feature>
<feature type="compositionally biased region" description="Polar residues" evidence="5">
    <location>
        <begin position="1111"/>
        <end position="1120"/>
    </location>
</feature>
<feature type="compositionally biased region" description="Low complexity" evidence="5">
    <location>
        <begin position="1130"/>
        <end position="1142"/>
    </location>
</feature>
<feature type="compositionally biased region" description="Basic and acidic residues" evidence="5">
    <location>
        <begin position="1177"/>
        <end position="1205"/>
    </location>
</feature>
<feature type="compositionally biased region" description="Basic residues" evidence="5">
    <location>
        <begin position="1207"/>
        <end position="1220"/>
    </location>
</feature>
<feature type="compositionally biased region" description="Basic residues" evidence="5">
    <location>
        <begin position="1228"/>
        <end position="1240"/>
    </location>
</feature>
<feature type="compositionally biased region" description="Basic and acidic residues" evidence="5">
    <location>
        <begin position="1269"/>
        <end position="1284"/>
    </location>
</feature>
<proteinExistence type="inferred from homology"/>